<organism>
    <name type="scientific">Arabidopsis thaliana</name>
    <name type="common">Mouse-ear cress</name>
    <dbReference type="NCBI Taxonomy" id="3702"/>
    <lineage>
        <taxon>Eukaryota</taxon>
        <taxon>Viridiplantae</taxon>
        <taxon>Streptophyta</taxon>
        <taxon>Embryophyta</taxon>
        <taxon>Tracheophyta</taxon>
        <taxon>Spermatophyta</taxon>
        <taxon>Magnoliopsida</taxon>
        <taxon>eudicotyledons</taxon>
        <taxon>Gunneridae</taxon>
        <taxon>Pentapetalae</taxon>
        <taxon>rosids</taxon>
        <taxon>malvids</taxon>
        <taxon>Brassicales</taxon>
        <taxon>Brassicaceae</taxon>
        <taxon>Camelineae</taxon>
        <taxon>Arabidopsis</taxon>
    </lineage>
</organism>
<protein>
    <recommendedName>
        <fullName>Transcription factor TRY</fullName>
    </recommendedName>
    <alternativeName>
        <fullName>Protein TRIPTYCHON</fullName>
    </alternativeName>
</protein>
<feature type="chain" id="PRO_0000285272" description="Transcription factor TRY">
    <location>
        <begin position="1"/>
        <end position="106"/>
    </location>
</feature>
<feature type="domain" description="Myb-like" evidence="1">
    <location>
        <begin position="34"/>
        <end position="71"/>
    </location>
</feature>
<feature type="region of interest" description="Disordered" evidence="2">
    <location>
        <begin position="83"/>
        <end position="106"/>
    </location>
</feature>
<feature type="compositionally biased region" description="Basic residues" evidence="2">
    <location>
        <begin position="84"/>
        <end position="100"/>
    </location>
</feature>
<evidence type="ECO:0000255" key="1">
    <source>
        <dbReference type="PROSITE-ProRule" id="PRU00133"/>
    </source>
</evidence>
<evidence type="ECO:0000256" key="2">
    <source>
        <dbReference type="SAM" id="MobiDB-lite"/>
    </source>
</evidence>
<evidence type="ECO:0000269" key="3">
    <source>
    </source>
</evidence>
<evidence type="ECO:0000269" key="4">
    <source>
    </source>
</evidence>
<evidence type="ECO:0000269" key="5">
    <source>
    </source>
</evidence>
<evidence type="ECO:0000269" key="6">
    <source>
    </source>
</evidence>
<evidence type="ECO:0000305" key="7"/>
<gene>
    <name type="primary">TRY</name>
    <name type="ordered locus">At5g53200</name>
    <name type="ORF">MFH8.14</name>
</gene>
<comment type="function">
    <text evidence="3 4">Transcription factor. Involved in epidermal cell fate specification. Negative regulator of trichome development, including endoreplication, by lateral inhibition involving intercellular interactions. Promotes the formation of hair developing cells (trichoblasts) in H position in root epidermis, probably by inhibiting non-hair cell (atrichoblasts) formation.</text>
</comment>
<comment type="subunit">
    <text evidence="5 6">Interacts with GL3 and thus prevents GL1 GL3 interaction. Also interacts with BHLH2.</text>
</comment>
<comment type="interaction">
    <interactant intactId="EBI-1545233">
        <id>Q8GV05</id>
    </interactant>
    <interactant intactId="EBI-15192535">
        <id>F4JI72</id>
        <label>At4g03250</label>
    </interactant>
    <organismsDiffer>false</organismsDiffer>
    <experiments>3</experiments>
</comment>
<comment type="interaction">
    <interactant intactId="EBI-1545233">
        <id>Q8GV05</id>
    </interactant>
    <interactant intactId="EBI-1237855">
        <id>Q9FMC2</id>
        <label>BZIP43</label>
    </interactant>
    <organismsDiffer>false</organismsDiffer>
    <experiments>3</experiments>
</comment>
<comment type="subcellular location">
    <subcellularLocation>
        <location evidence="6">Nucleus</location>
    </subcellularLocation>
    <text>Detected in trichome nucleus.</text>
</comment>
<comment type="tissue specificity">
    <text evidence="4">Expressed in roots, leaves, siliques and inflorescences.</text>
</comment>
<comment type="developmental stage">
    <text evidence="4">Ubiquitous in young leaves. Later, restricted to the leaf base in the trichome initiation zone. In mature leaves, confined to trichome cells.</text>
</comment>
<comment type="induction">
    <text evidence="4">Negative autoregulation. Repressed by CPC.</text>
</comment>
<comment type="miscellaneous">
    <text>'Triptychon' means 'triptych' in German. This protein was called 'triptychon' because TRY regulates the branching of trichomes in three branches.</text>
</comment>
<comment type="sequence caution" evidence="7">
    <conflict type="erroneous gene model prediction">
        <sequence resource="EMBL-CDS" id="BAB08423"/>
    </conflict>
</comment>
<reference key="1">
    <citation type="journal article" date="2002" name="EMBO J.">
        <title>TRIPTYCHON and CAPRICE mediate lateral inhibition during trichome and root hair patterning in Arabidopsis.</title>
        <authorList>
            <person name="Schellmann S."/>
            <person name="Schnittger A."/>
            <person name="Kirik V."/>
            <person name="Wada T."/>
            <person name="Okada K."/>
            <person name="Beermann A."/>
            <person name="Thumfahrt J."/>
            <person name="Juergens G."/>
            <person name="Huelskamp M."/>
        </authorList>
    </citation>
    <scope>NUCLEOTIDE SEQUENCE [MRNA]</scope>
    <scope>FUNCTION</scope>
    <scope>DEVELOPMENTAL STAGE</scope>
    <scope>INDUCTION</scope>
    <scope>TISSUE SPECIFICITY</scope>
    <source>
        <strain>cv. Columbia</strain>
        <tissue>Root</tissue>
    </source>
</reference>
<reference key="2">
    <citation type="submission" date="2004-01" db="EMBL/GenBank/DDBJ databases">
        <title>The MYB transcription factor family in Arabidopsis: a genome-wide cloning and expression pattern analysis.</title>
        <authorList>
            <person name="Qu L.-J."/>
            <person name="Gu H."/>
        </authorList>
    </citation>
    <scope>NUCLEOTIDE SEQUENCE [MRNA]</scope>
</reference>
<reference key="3">
    <citation type="submission" date="1999-04" db="EMBL/GenBank/DDBJ databases">
        <title>Structural analysis of Arabidopsis thaliana chromosome 5. XI.</title>
        <authorList>
            <person name="Kaneko T."/>
            <person name="Katoh T."/>
            <person name="Asamizu E."/>
            <person name="Sato S."/>
            <person name="Nakamura Y."/>
            <person name="Kotani H."/>
            <person name="Tabata S."/>
        </authorList>
    </citation>
    <scope>NUCLEOTIDE SEQUENCE [LARGE SCALE GENOMIC DNA]</scope>
    <source>
        <strain>cv. Columbia</strain>
    </source>
</reference>
<reference key="4">
    <citation type="journal article" date="2017" name="Plant J.">
        <title>Araport11: a complete reannotation of the Arabidopsis thaliana reference genome.</title>
        <authorList>
            <person name="Cheng C.Y."/>
            <person name="Krishnakumar V."/>
            <person name="Chan A.P."/>
            <person name="Thibaud-Nissen F."/>
            <person name="Schobel S."/>
            <person name="Town C.D."/>
        </authorList>
    </citation>
    <scope>GENOME REANNOTATION</scope>
    <source>
        <strain>cv. Columbia</strain>
    </source>
</reference>
<reference key="5">
    <citation type="submission" date="2006-02" db="EMBL/GenBank/DDBJ databases">
        <title>Arabidopsis ORF clones.</title>
        <authorList>
            <person name="Shinn P."/>
            <person name="Chen H."/>
            <person name="Kim C.J."/>
            <person name="Ecker J.R."/>
        </authorList>
    </citation>
    <scope>NUCLEOTIDE SEQUENCE [LARGE SCALE MRNA]</scope>
    <source>
        <strain>cv. Columbia</strain>
    </source>
</reference>
<reference key="6">
    <citation type="journal article" date="1999" name="Plant Cell">
        <title>Generation of a spacing pattern: the role of TRIPTYCHON in trichome patterning in Arabidopsis.</title>
        <authorList>
            <person name="Schnittger A."/>
            <person name="Folkers U."/>
            <person name="Schwab B."/>
            <person name="Juergens G."/>
            <person name="Huelskamp M."/>
        </authorList>
    </citation>
    <scope>FUNCTION</scope>
</reference>
<reference key="7">
    <citation type="journal article" date="2003" name="Development">
        <title>A network of redundant bHLH proteins functions in all TTG1-dependent pathways of Arabidopsis.</title>
        <authorList>
            <person name="Zhang F."/>
            <person name="Gonzalez A."/>
            <person name="Zhao M."/>
            <person name="Payne C.T."/>
            <person name="Lloyd A.M."/>
        </authorList>
    </citation>
    <scope>INTERACTION WITH BHLH2</scope>
</reference>
<reference key="8">
    <citation type="journal article" date="2003" name="Development">
        <title>A contradictory GLABRA3 allele helps define gene interactions controlling trichome development in Arabidopsis.</title>
        <authorList>
            <person name="Esch J.J."/>
            <person name="Chen M."/>
            <person name="Sanders M."/>
            <person name="Hillestad M."/>
            <person name="Ndkium S."/>
            <person name="Idelkope B."/>
            <person name="Neizer J."/>
            <person name="Marks M.D."/>
        </authorList>
    </citation>
    <scope>INTERACTION WITH GL3</scope>
    <scope>SUBCELLULAR LOCATION</scope>
</reference>
<reference key="9">
    <citation type="journal article" date="2006" name="Plant Mol. Biol.">
        <title>The MYB transcription factor superfamily of Arabidopsis: expression analysis and phylogenetic comparison with the rice MYB family.</title>
        <authorList>
            <person name="Chen Y."/>
            <person name="Yang X."/>
            <person name="He K."/>
            <person name="Liu M."/>
            <person name="Li J."/>
            <person name="Gao Z."/>
            <person name="Lin Z."/>
            <person name="Zhang Y."/>
            <person name="Wang X."/>
            <person name="Qiu X."/>
            <person name="Shen Y."/>
            <person name="Zhang L."/>
            <person name="Deng X."/>
            <person name="Luo J."/>
            <person name="Deng X.-W."/>
            <person name="Chen Z."/>
            <person name="Gu H."/>
            <person name="Qu L.-J."/>
        </authorList>
    </citation>
    <scope>GENE FAMILY</scope>
</reference>
<dbReference type="EMBL" id="AY161286">
    <property type="protein sequence ID" value="AAN78321.1"/>
    <property type="molecule type" value="mRNA"/>
</dbReference>
<dbReference type="EMBL" id="AY519523">
    <property type="protein sequence ID" value="AAS09993.1"/>
    <property type="molecule type" value="mRNA"/>
</dbReference>
<dbReference type="EMBL" id="AB025622">
    <property type="protein sequence ID" value="BAB08423.1"/>
    <property type="status" value="ALT_SEQ"/>
    <property type="molecule type" value="Genomic_DNA"/>
</dbReference>
<dbReference type="EMBL" id="CP002688">
    <property type="protein sequence ID" value="AED96321.1"/>
    <property type="molecule type" value="Genomic_DNA"/>
</dbReference>
<dbReference type="EMBL" id="BT024672">
    <property type="protein sequence ID" value="ABD57497.1"/>
    <property type="molecule type" value="mRNA"/>
</dbReference>
<dbReference type="RefSeq" id="NP_200132.2">
    <property type="nucleotide sequence ID" value="NM_124699.3"/>
</dbReference>
<dbReference type="SMR" id="Q8GV05"/>
<dbReference type="BioGRID" id="20646">
    <property type="interactions" value="18"/>
</dbReference>
<dbReference type="FunCoup" id="Q8GV05">
    <property type="interactions" value="189"/>
</dbReference>
<dbReference type="IntAct" id="Q8GV05">
    <property type="interactions" value="14"/>
</dbReference>
<dbReference type="STRING" id="3702.Q8GV05"/>
<dbReference type="PaxDb" id="3702-AT5G53200.1"/>
<dbReference type="EnsemblPlants" id="AT5G53200.1">
    <property type="protein sequence ID" value="AT5G53200.1"/>
    <property type="gene ID" value="AT5G53200"/>
</dbReference>
<dbReference type="GeneID" id="835401"/>
<dbReference type="Gramene" id="AT5G53200.1">
    <property type="protein sequence ID" value="AT5G53200.1"/>
    <property type="gene ID" value="AT5G53200"/>
</dbReference>
<dbReference type="KEGG" id="ath:AT5G53200"/>
<dbReference type="Araport" id="AT5G53200"/>
<dbReference type="TAIR" id="AT5G53200">
    <property type="gene designation" value="TRY"/>
</dbReference>
<dbReference type="eggNOG" id="ENOG502S4DP">
    <property type="taxonomic scope" value="Eukaryota"/>
</dbReference>
<dbReference type="HOGENOM" id="CLU_178021_1_0_1"/>
<dbReference type="InParanoid" id="Q8GV05"/>
<dbReference type="OMA" id="WEFIDMT"/>
<dbReference type="OrthoDB" id="1077569at2759"/>
<dbReference type="PhylomeDB" id="Q8GV05"/>
<dbReference type="PRO" id="PR:Q8GV05"/>
<dbReference type="Proteomes" id="UP000006548">
    <property type="component" value="Chromosome 5"/>
</dbReference>
<dbReference type="ExpressionAtlas" id="Q8GV05">
    <property type="expression patterns" value="baseline and differential"/>
</dbReference>
<dbReference type="GO" id="GO:0005634">
    <property type="term" value="C:nucleus"/>
    <property type="evidence" value="ECO:0007669"/>
    <property type="project" value="UniProtKB-SubCell"/>
</dbReference>
<dbReference type="GO" id="GO:0003700">
    <property type="term" value="F:DNA-binding transcription factor activity"/>
    <property type="evidence" value="ECO:0000250"/>
    <property type="project" value="TAIR"/>
</dbReference>
<dbReference type="GO" id="GO:0000976">
    <property type="term" value="F:transcription cis-regulatory region binding"/>
    <property type="evidence" value="ECO:0000353"/>
    <property type="project" value="TAIR"/>
</dbReference>
<dbReference type="GO" id="GO:0010154">
    <property type="term" value="P:fruit development"/>
    <property type="evidence" value="ECO:0000315"/>
    <property type="project" value="TAIR"/>
</dbReference>
<dbReference type="GO" id="GO:0006355">
    <property type="term" value="P:regulation of DNA-templated transcription"/>
    <property type="evidence" value="ECO:0000304"/>
    <property type="project" value="TAIR"/>
</dbReference>
<dbReference type="GO" id="GO:1900032">
    <property type="term" value="P:regulation of trichome patterning"/>
    <property type="evidence" value="ECO:0000315"/>
    <property type="project" value="TAIR"/>
</dbReference>
<dbReference type="GO" id="GO:0010091">
    <property type="term" value="P:trichome branching"/>
    <property type="evidence" value="ECO:0000315"/>
    <property type="project" value="TAIR"/>
</dbReference>
<dbReference type="CDD" id="cd00167">
    <property type="entry name" value="SANT"/>
    <property type="match status" value="1"/>
</dbReference>
<dbReference type="FunFam" id="1.10.10.60:FF:000411">
    <property type="entry name" value="Transcription factor TRY"/>
    <property type="match status" value="1"/>
</dbReference>
<dbReference type="Gene3D" id="1.10.10.60">
    <property type="entry name" value="Homeodomain-like"/>
    <property type="match status" value="1"/>
</dbReference>
<dbReference type="InterPro" id="IPR009057">
    <property type="entry name" value="Homeodomain-like_sf"/>
</dbReference>
<dbReference type="InterPro" id="IPR015495">
    <property type="entry name" value="Myb_TF_plants"/>
</dbReference>
<dbReference type="InterPro" id="IPR001005">
    <property type="entry name" value="SANT/Myb"/>
</dbReference>
<dbReference type="PANTHER" id="PTHR47998">
    <property type="entry name" value="TRANSCRIPTION FACTOR MYB51-LIKE ISOFORM X1"/>
    <property type="match status" value="1"/>
</dbReference>
<dbReference type="PANTHER" id="PTHR47998:SF88">
    <property type="entry name" value="TRANSCRIPTION FACTOR TRY"/>
    <property type="match status" value="1"/>
</dbReference>
<dbReference type="Pfam" id="PF00249">
    <property type="entry name" value="Myb_DNA-binding"/>
    <property type="match status" value="1"/>
</dbReference>
<dbReference type="SMART" id="SM00717">
    <property type="entry name" value="SANT"/>
    <property type="match status" value="1"/>
</dbReference>
<dbReference type="SUPFAM" id="SSF46689">
    <property type="entry name" value="Homeodomain-like"/>
    <property type="match status" value="1"/>
</dbReference>
<dbReference type="PROSITE" id="PS50090">
    <property type="entry name" value="MYB_LIKE"/>
    <property type="match status" value="1"/>
</dbReference>
<proteinExistence type="evidence at protein level"/>
<name>TRY_ARATH</name>
<keyword id="KW-0217">Developmental protein</keyword>
<keyword id="KW-0238">DNA-binding</keyword>
<keyword id="KW-0539">Nucleus</keyword>
<keyword id="KW-1185">Reference proteome</keyword>
<keyword id="KW-0804">Transcription</keyword>
<keyword id="KW-0805">Transcription regulation</keyword>
<sequence>MDNTDRRRRRKQHKIALHDSEEVSSIEWEFINMTEQEEDLIFRMYRLVGDRWDLIAGRVPGRQPEEIERYWIMRNSEGFADKRRQLHSSSHKHTKPHRPRFSIYPS</sequence>
<accession>Q8GV05</accession>
<accession>Q9FGL7</accession>